<organism>
    <name type="scientific">Shewanella sp. (strain MR-7)</name>
    <dbReference type="NCBI Taxonomy" id="60481"/>
    <lineage>
        <taxon>Bacteria</taxon>
        <taxon>Pseudomonadati</taxon>
        <taxon>Pseudomonadota</taxon>
        <taxon>Gammaproteobacteria</taxon>
        <taxon>Alteromonadales</taxon>
        <taxon>Shewanellaceae</taxon>
        <taxon>Shewanella</taxon>
    </lineage>
</organism>
<dbReference type="EMBL" id="CP000444">
    <property type="protein sequence ID" value="ABI44358.1"/>
    <property type="molecule type" value="Genomic_DNA"/>
</dbReference>
<dbReference type="KEGG" id="shm:Shewmr7_3376"/>
<dbReference type="HOGENOM" id="CLU_097887_1_1_6"/>
<dbReference type="GO" id="GO:0005886">
    <property type="term" value="C:plasma membrane"/>
    <property type="evidence" value="ECO:0007669"/>
    <property type="project" value="UniProtKB-SubCell"/>
</dbReference>
<dbReference type="HAMAP" id="MF_00143">
    <property type="entry name" value="UPF0114"/>
    <property type="match status" value="1"/>
</dbReference>
<dbReference type="InterPro" id="IPR005134">
    <property type="entry name" value="UPF0114"/>
</dbReference>
<dbReference type="InterPro" id="IPR020761">
    <property type="entry name" value="UPF0114_bac"/>
</dbReference>
<dbReference type="NCBIfam" id="TIGR00645">
    <property type="entry name" value="HI0507"/>
    <property type="match status" value="1"/>
</dbReference>
<dbReference type="PANTHER" id="PTHR38596">
    <property type="entry name" value="UPF0114 PROTEIN YQHA"/>
    <property type="match status" value="1"/>
</dbReference>
<dbReference type="PANTHER" id="PTHR38596:SF1">
    <property type="entry name" value="UPF0114 PROTEIN YQHA"/>
    <property type="match status" value="1"/>
</dbReference>
<dbReference type="Pfam" id="PF03350">
    <property type="entry name" value="UPF0114"/>
    <property type="match status" value="1"/>
</dbReference>
<evidence type="ECO:0000255" key="1">
    <source>
        <dbReference type="HAMAP-Rule" id="MF_00143"/>
    </source>
</evidence>
<feature type="chain" id="PRO_1000009497" description="UPF0114 protein Shewmr7_3376">
    <location>
        <begin position="1"/>
        <end position="162"/>
    </location>
</feature>
<feature type="transmembrane region" description="Helical" evidence="1">
    <location>
        <begin position="15"/>
        <end position="35"/>
    </location>
</feature>
<feature type="transmembrane region" description="Helical" evidence="1">
    <location>
        <begin position="53"/>
        <end position="73"/>
    </location>
</feature>
<feature type="transmembrane region" description="Helical" evidence="1">
    <location>
        <begin position="108"/>
        <end position="128"/>
    </location>
</feature>
<feature type="transmembrane region" description="Helical" evidence="1">
    <location>
        <begin position="136"/>
        <end position="156"/>
    </location>
</feature>
<sequence>MEKIFERLMYASRWIMAPIYLGLSLVLLGLGIKFFQEIFHILPIIFEMTEVDLVLVTLSLIDITLVGGLIVMVMFSGYENFVSQLDVGEDSEKLSWLGKLDSGSLKNKVAASIVAISSIHLLKIFMDVKNIDNDKIMWYLLIHITFVVSAFAMGYLDKMTRK</sequence>
<comment type="subcellular location">
    <subcellularLocation>
        <location evidence="1">Cell membrane</location>
        <topology evidence="1">Multi-pass membrane protein</topology>
    </subcellularLocation>
</comment>
<comment type="similarity">
    <text evidence="1">Belongs to the UPF0114 family.</text>
</comment>
<accession>Q0HR97</accession>
<reference key="1">
    <citation type="submission" date="2006-08" db="EMBL/GenBank/DDBJ databases">
        <title>Complete sequence of chromosome 1 of Shewanella sp. MR-7.</title>
        <authorList>
            <person name="Copeland A."/>
            <person name="Lucas S."/>
            <person name="Lapidus A."/>
            <person name="Barry K."/>
            <person name="Detter J.C."/>
            <person name="Glavina del Rio T."/>
            <person name="Hammon N."/>
            <person name="Israni S."/>
            <person name="Dalin E."/>
            <person name="Tice H."/>
            <person name="Pitluck S."/>
            <person name="Kiss H."/>
            <person name="Brettin T."/>
            <person name="Bruce D."/>
            <person name="Han C."/>
            <person name="Tapia R."/>
            <person name="Gilna P."/>
            <person name="Schmutz J."/>
            <person name="Larimer F."/>
            <person name="Land M."/>
            <person name="Hauser L."/>
            <person name="Kyrpides N."/>
            <person name="Mikhailova N."/>
            <person name="Nealson K."/>
            <person name="Konstantinidis K."/>
            <person name="Klappenbach J."/>
            <person name="Tiedje J."/>
            <person name="Richardson P."/>
        </authorList>
    </citation>
    <scope>NUCLEOTIDE SEQUENCE [LARGE SCALE GENOMIC DNA]</scope>
    <source>
        <strain>MR-7</strain>
    </source>
</reference>
<protein>
    <recommendedName>
        <fullName evidence="1">UPF0114 protein Shewmr7_3376</fullName>
    </recommendedName>
</protein>
<name>Y3376_SHESR</name>
<keyword id="KW-1003">Cell membrane</keyword>
<keyword id="KW-0472">Membrane</keyword>
<keyword id="KW-0812">Transmembrane</keyword>
<keyword id="KW-1133">Transmembrane helix</keyword>
<gene>
    <name type="ordered locus">Shewmr7_3376</name>
</gene>
<proteinExistence type="inferred from homology"/>